<protein>
    <recommendedName>
        <fullName evidence="1">UPF0102 protein Gura_3756</fullName>
    </recommendedName>
</protein>
<feature type="chain" id="PRO_0000336183" description="UPF0102 protein Gura_3756">
    <location>
        <begin position="1"/>
        <end position="127"/>
    </location>
</feature>
<evidence type="ECO:0000255" key="1">
    <source>
        <dbReference type="HAMAP-Rule" id="MF_00048"/>
    </source>
</evidence>
<organism>
    <name type="scientific">Geotalea uraniireducens (strain Rf4)</name>
    <name type="common">Geobacter uraniireducens</name>
    <dbReference type="NCBI Taxonomy" id="351605"/>
    <lineage>
        <taxon>Bacteria</taxon>
        <taxon>Pseudomonadati</taxon>
        <taxon>Thermodesulfobacteriota</taxon>
        <taxon>Desulfuromonadia</taxon>
        <taxon>Geobacterales</taxon>
        <taxon>Geobacteraceae</taxon>
        <taxon>Geotalea</taxon>
    </lineage>
</organism>
<name>Y3756_GEOUR</name>
<dbReference type="EMBL" id="CP000698">
    <property type="protein sequence ID" value="ABQ27909.1"/>
    <property type="molecule type" value="Genomic_DNA"/>
</dbReference>
<dbReference type="RefSeq" id="WP_011940558.1">
    <property type="nucleotide sequence ID" value="NC_009483.1"/>
</dbReference>
<dbReference type="SMR" id="A5G7Z1"/>
<dbReference type="STRING" id="351605.Gura_3756"/>
<dbReference type="KEGG" id="gur:Gura_3756"/>
<dbReference type="HOGENOM" id="CLU_115353_2_1_7"/>
<dbReference type="OrthoDB" id="9794876at2"/>
<dbReference type="Proteomes" id="UP000006695">
    <property type="component" value="Chromosome"/>
</dbReference>
<dbReference type="GO" id="GO:0003676">
    <property type="term" value="F:nucleic acid binding"/>
    <property type="evidence" value="ECO:0007669"/>
    <property type="project" value="InterPro"/>
</dbReference>
<dbReference type="CDD" id="cd20736">
    <property type="entry name" value="PoNe_Nuclease"/>
    <property type="match status" value="1"/>
</dbReference>
<dbReference type="Gene3D" id="3.40.1350.10">
    <property type="match status" value="1"/>
</dbReference>
<dbReference type="HAMAP" id="MF_00048">
    <property type="entry name" value="UPF0102"/>
    <property type="match status" value="1"/>
</dbReference>
<dbReference type="InterPro" id="IPR011335">
    <property type="entry name" value="Restrct_endonuc-II-like"/>
</dbReference>
<dbReference type="InterPro" id="IPR011856">
    <property type="entry name" value="tRNA_endonuc-like_dom_sf"/>
</dbReference>
<dbReference type="InterPro" id="IPR003509">
    <property type="entry name" value="UPF0102_YraN-like"/>
</dbReference>
<dbReference type="NCBIfam" id="NF009150">
    <property type="entry name" value="PRK12497.1-3"/>
    <property type="match status" value="1"/>
</dbReference>
<dbReference type="NCBIfam" id="NF009154">
    <property type="entry name" value="PRK12497.3-3"/>
    <property type="match status" value="1"/>
</dbReference>
<dbReference type="NCBIfam" id="NF011268">
    <property type="entry name" value="PRK14675.1"/>
    <property type="match status" value="1"/>
</dbReference>
<dbReference type="NCBIfam" id="TIGR00252">
    <property type="entry name" value="YraN family protein"/>
    <property type="match status" value="1"/>
</dbReference>
<dbReference type="PANTHER" id="PTHR34039">
    <property type="entry name" value="UPF0102 PROTEIN YRAN"/>
    <property type="match status" value="1"/>
</dbReference>
<dbReference type="PANTHER" id="PTHR34039:SF1">
    <property type="entry name" value="UPF0102 PROTEIN YRAN"/>
    <property type="match status" value="1"/>
</dbReference>
<dbReference type="Pfam" id="PF02021">
    <property type="entry name" value="UPF0102"/>
    <property type="match status" value="1"/>
</dbReference>
<dbReference type="SUPFAM" id="SSF52980">
    <property type="entry name" value="Restriction endonuclease-like"/>
    <property type="match status" value="1"/>
</dbReference>
<sequence length="127" mass="14335">MRSEDRADNKSLGEQGEAIAVCYLKGRKYAIVERNFRCKCGEVDIIARDGKTIVFVEVKTRRNEACGPPQASVTPFKQRQISKAALTWLAKKMLLDAPARFDVVAILQRDHAVPEIEHIKDAFELAY</sequence>
<comment type="similarity">
    <text evidence="1">Belongs to the UPF0102 family.</text>
</comment>
<keyword id="KW-1185">Reference proteome</keyword>
<gene>
    <name type="ordered locus">Gura_3756</name>
</gene>
<accession>A5G7Z1</accession>
<proteinExistence type="inferred from homology"/>
<reference key="1">
    <citation type="submission" date="2007-05" db="EMBL/GenBank/DDBJ databases">
        <title>Complete sequence of Geobacter uraniireducens Rf4.</title>
        <authorList>
            <consortium name="US DOE Joint Genome Institute"/>
            <person name="Copeland A."/>
            <person name="Lucas S."/>
            <person name="Lapidus A."/>
            <person name="Barry K."/>
            <person name="Detter J.C."/>
            <person name="Glavina del Rio T."/>
            <person name="Hammon N."/>
            <person name="Israni S."/>
            <person name="Dalin E."/>
            <person name="Tice H."/>
            <person name="Pitluck S."/>
            <person name="Chertkov O."/>
            <person name="Brettin T."/>
            <person name="Bruce D."/>
            <person name="Han C."/>
            <person name="Schmutz J."/>
            <person name="Larimer F."/>
            <person name="Land M."/>
            <person name="Hauser L."/>
            <person name="Kyrpides N."/>
            <person name="Mikhailova N."/>
            <person name="Shelobolina E."/>
            <person name="Aklujkar M."/>
            <person name="Lovley D."/>
            <person name="Richardson P."/>
        </authorList>
    </citation>
    <scope>NUCLEOTIDE SEQUENCE [LARGE SCALE GENOMIC DNA]</scope>
    <source>
        <strain>ATCC BAA-1134 / JCM 13001 / Rf4</strain>
    </source>
</reference>